<gene>
    <name evidence="5" type="primary">Parp6</name>
</gene>
<accession>Q6P6P7</accession>
<accession>Q8BVW1</accession>
<comment type="function">
    <text evidence="1">Mono-ADP-ribosyltransferase that mediates mono-ADP-ribosylation of target proteins.</text>
</comment>
<comment type="catalytic activity">
    <reaction evidence="1">
        <text>L-aspartyl-[protein] + NAD(+) = 4-O-(ADP-D-ribosyl)-L-aspartyl-[protein] + nicotinamide</text>
        <dbReference type="Rhea" id="RHEA:54424"/>
        <dbReference type="Rhea" id="RHEA-COMP:9867"/>
        <dbReference type="Rhea" id="RHEA-COMP:13832"/>
        <dbReference type="ChEBI" id="CHEBI:17154"/>
        <dbReference type="ChEBI" id="CHEBI:29961"/>
        <dbReference type="ChEBI" id="CHEBI:57540"/>
        <dbReference type="ChEBI" id="CHEBI:138102"/>
    </reaction>
</comment>
<comment type="catalytic activity">
    <reaction evidence="1">
        <text>L-cysteinyl-[protein] + NAD(+) = S-(ADP-D-ribosyl)-L-cysteinyl-[protein] + nicotinamide + H(+)</text>
        <dbReference type="Rhea" id="RHEA:56612"/>
        <dbReference type="Rhea" id="RHEA-COMP:10131"/>
        <dbReference type="Rhea" id="RHEA-COMP:14624"/>
        <dbReference type="ChEBI" id="CHEBI:15378"/>
        <dbReference type="ChEBI" id="CHEBI:17154"/>
        <dbReference type="ChEBI" id="CHEBI:29950"/>
        <dbReference type="ChEBI" id="CHEBI:57540"/>
        <dbReference type="ChEBI" id="CHEBI:140607"/>
    </reaction>
</comment>
<comment type="alternative products">
    <event type="alternative splicing"/>
    <isoform>
        <id>Q6P6P7-1</id>
        <name>1</name>
        <sequence type="displayed"/>
    </isoform>
    <isoform>
        <id>Q6P6P7-2</id>
        <name>2</name>
        <sequence type="described" ref="VSP_020967 VSP_020968 VSP_020969"/>
    </isoform>
</comment>
<comment type="PTM">
    <text evidence="1">Auto-mono-ADP-ribosylated.</text>
</comment>
<comment type="similarity">
    <text evidence="4">Belongs to the ARTD/PARP family.</text>
</comment>
<organism>
    <name type="scientific">Mus musculus</name>
    <name type="common">Mouse</name>
    <dbReference type="NCBI Taxonomy" id="10090"/>
    <lineage>
        <taxon>Eukaryota</taxon>
        <taxon>Metazoa</taxon>
        <taxon>Chordata</taxon>
        <taxon>Craniata</taxon>
        <taxon>Vertebrata</taxon>
        <taxon>Euteleostomi</taxon>
        <taxon>Mammalia</taxon>
        <taxon>Eutheria</taxon>
        <taxon>Euarchontoglires</taxon>
        <taxon>Glires</taxon>
        <taxon>Rodentia</taxon>
        <taxon>Myomorpha</taxon>
        <taxon>Muroidea</taxon>
        <taxon>Muridae</taxon>
        <taxon>Murinae</taxon>
        <taxon>Mus</taxon>
        <taxon>Mus</taxon>
    </lineage>
</organism>
<sequence>MDIKGQFWNDDDSEGDNESEEFLYGVQGSCAADLYRHPQLDADIEAVKEIYSENSVSIREYGTIDDVDLDLHINISFLDEEVSTAWKVLRTEPIVLRLRFSLSQYLDGPEPSIEVFQPSNKEGFGLGLQLKKILCMFTSQQWKHLSNDFLKTQQEKRHSWFKASGTIKKFRAGLSIFSPIPKSPSFPIIQDSMLKGKLGVPELRVGRLMNRSISCTMKNPKVEVFGYPPSPQAGLLCPQHVGLPPPARTSPLVSGHCKNIPTLEYGFLVQIMKYAEQRIPTLNEYCVVCDEQHVFQNGSMLKPAVCTRELCVFSFYTLGVMSGAAEEVATGAEVVDLQVAMCRAALESPRKSIIFEPYPSVVDPTDPKTLAFNPKKKNYERLQKALDSVMSIREMTQGSYLEIKKQMDKLDPLAHPLLQWIISSNRSHIVKLPLSRLKFMHTSHQFLLLSSPPAKEARFRTAKKLYGSTFAFHGSHIENWHSILRNGLVNASYTKLQLHGAAYGKGIYLSPISSISFGYSGMGKGQHRMPSKDELVQRYNRMNTIPQTRSIQSRFLQSRNLNCIALCEVITSKDLQKHGNIWVCPVSDHVCTRFFFVYEDGQVGDANINTQDPKIQKEIMRVIGTQVYTN</sequence>
<feature type="chain" id="PRO_0000252431" description="Protein mono-ADP-ribosyltransferase PARP6">
    <location>
        <begin position="1"/>
        <end position="630"/>
    </location>
</feature>
<feature type="domain" description="PARP catalytic" evidence="2">
    <location>
        <begin position="394"/>
        <end position="620"/>
    </location>
</feature>
<feature type="modified residue" description="ADP-ribosylcysteine" evidence="1">
    <location>
        <position position="237"/>
    </location>
</feature>
<feature type="modified residue" description="ADP-ribosyl aspartic acid" evidence="1">
    <location>
        <position position="600"/>
    </location>
</feature>
<feature type="splice variant" id="VSP_020967" description="In isoform 2." evidence="3">
    <location>
        <begin position="233"/>
        <end position="252"/>
    </location>
</feature>
<feature type="splice variant" id="VSP_020968" description="In isoform 2." evidence="3">
    <original>LHGAAYGKGIYLSPISSISFG</original>
    <variation>EWAKDSTGCLPRMSWSRDTTG</variation>
    <location>
        <begin position="498"/>
        <end position="518"/>
    </location>
</feature>
<feature type="splice variant" id="VSP_020969" description="In isoform 2." evidence="3">
    <location>
        <begin position="519"/>
        <end position="630"/>
    </location>
</feature>
<feature type="sequence conflict" description="In Ref. 1; BAC36299." evidence="4" ref="1">
    <original>Q</original>
    <variation>L</variation>
    <location>
        <position position="338"/>
    </location>
</feature>
<proteinExistence type="evidence at transcript level"/>
<dbReference type="EC" id="2.4.2.-" evidence="1"/>
<dbReference type="EMBL" id="AK076321">
    <property type="protein sequence ID" value="BAC36299.1"/>
    <property type="molecule type" value="mRNA"/>
</dbReference>
<dbReference type="EMBL" id="BC062096">
    <property type="protein sequence ID" value="AAH62096.1"/>
    <property type="molecule type" value="mRNA"/>
</dbReference>
<dbReference type="CCDS" id="CCDS57680.1">
    <molecule id="Q6P6P7-1"/>
</dbReference>
<dbReference type="RefSeq" id="NP_001192168.1">
    <property type="nucleotide sequence ID" value="NM_001205239.1"/>
</dbReference>
<dbReference type="SMR" id="Q6P6P7"/>
<dbReference type="BioGRID" id="212075">
    <property type="interactions" value="2"/>
</dbReference>
<dbReference type="FunCoup" id="Q6P6P7">
    <property type="interactions" value="1026"/>
</dbReference>
<dbReference type="STRING" id="10090.ENSMUSP00000026267"/>
<dbReference type="GlyGen" id="Q6P6P7">
    <property type="glycosylation" value="1 site"/>
</dbReference>
<dbReference type="PhosphoSitePlus" id="Q6P6P7"/>
<dbReference type="PaxDb" id="10090-ENSMUSP00000026267"/>
<dbReference type="ProteomicsDB" id="287956">
    <molecule id="Q6P6P7-1"/>
</dbReference>
<dbReference type="ProteomicsDB" id="287957">
    <molecule id="Q6P6P7-2"/>
</dbReference>
<dbReference type="GeneID" id="67287"/>
<dbReference type="KEGG" id="mmu:67287"/>
<dbReference type="AGR" id="MGI:1914537"/>
<dbReference type="CTD" id="56965"/>
<dbReference type="MGI" id="MGI:1914537">
    <property type="gene designation" value="Parp6"/>
</dbReference>
<dbReference type="eggNOG" id="ENOG502QPRC">
    <property type="taxonomic scope" value="Eukaryota"/>
</dbReference>
<dbReference type="InParanoid" id="Q6P6P7"/>
<dbReference type="OrthoDB" id="109543at2759"/>
<dbReference type="PhylomeDB" id="Q6P6P7"/>
<dbReference type="Reactome" id="R-MMU-197264">
    <property type="pathway name" value="Nicotinamide salvaging"/>
</dbReference>
<dbReference type="BioGRID-ORCS" id="67287">
    <property type="hits" value="3 hits in 78 CRISPR screens"/>
</dbReference>
<dbReference type="ChiTaRS" id="Parp6">
    <property type="organism name" value="mouse"/>
</dbReference>
<dbReference type="PRO" id="PR:Q6P6P7"/>
<dbReference type="Proteomes" id="UP000000589">
    <property type="component" value="Unplaced"/>
</dbReference>
<dbReference type="RNAct" id="Q6P6P7">
    <property type="molecule type" value="protein"/>
</dbReference>
<dbReference type="GO" id="GO:0003950">
    <property type="term" value="F:NAD+ poly-ADP-ribosyltransferase activity"/>
    <property type="evidence" value="ECO:0007669"/>
    <property type="project" value="InterPro"/>
</dbReference>
<dbReference type="GO" id="GO:0140806">
    <property type="term" value="F:NAD+-protein-aspartate ADP-ribosyltransferase activity"/>
    <property type="evidence" value="ECO:0000250"/>
    <property type="project" value="UniProtKB"/>
</dbReference>
<dbReference type="GO" id="GO:0140803">
    <property type="term" value="F:NAD+-protein-cysteine ADP-ribosyltransferase activity"/>
    <property type="evidence" value="ECO:0000250"/>
    <property type="project" value="UniProtKB"/>
</dbReference>
<dbReference type="GO" id="GO:0016779">
    <property type="term" value="F:nucleotidyltransferase activity"/>
    <property type="evidence" value="ECO:0007669"/>
    <property type="project" value="UniProtKB-KW"/>
</dbReference>
<dbReference type="GO" id="GO:0070213">
    <property type="term" value="P:protein auto-ADP-ribosylation"/>
    <property type="evidence" value="ECO:0000250"/>
    <property type="project" value="UniProtKB"/>
</dbReference>
<dbReference type="CDD" id="cd01341">
    <property type="entry name" value="ADP_ribosyl"/>
    <property type="match status" value="2"/>
</dbReference>
<dbReference type="FunFam" id="3.90.228.10:FF:000032">
    <property type="entry name" value="Poly [ADP-ribose] polymerase"/>
    <property type="match status" value="1"/>
</dbReference>
<dbReference type="Gene3D" id="3.90.228.10">
    <property type="match status" value="1"/>
</dbReference>
<dbReference type="InterPro" id="IPR051838">
    <property type="entry name" value="ARTD_PARP"/>
</dbReference>
<dbReference type="InterPro" id="IPR012317">
    <property type="entry name" value="Poly(ADP-ribose)pol_cat_dom"/>
</dbReference>
<dbReference type="PANTHER" id="PTHR21328">
    <property type="entry name" value="POLY ADP-RIBOSE POLYMERASE FAMILY, MEMBER PARP"/>
    <property type="match status" value="1"/>
</dbReference>
<dbReference type="Pfam" id="PF00644">
    <property type="entry name" value="PARP"/>
    <property type="match status" value="1"/>
</dbReference>
<dbReference type="SUPFAM" id="SSF56399">
    <property type="entry name" value="ADP-ribosylation"/>
    <property type="match status" value="1"/>
</dbReference>
<dbReference type="PROSITE" id="PS51059">
    <property type="entry name" value="PARP_CATALYTIC"/>
    <property type="match status" value="1"/>
</dbReference>
<name>PARP6_MOUSE</name>
<keyword id="KW-0013">ADP-ribosylation</keyword>
<keyword id="KW-0025">Alternative splicing</keyword>
<keyword id="KW-0328">Glycosyltransferase</keyword>
<keyword id="KW-0520">NAD</keyword>
<keyword id="KW-0548">Nucleotidyltransferase</keyword>
<keyword id="KW-1185">Reference proteome</keyword>
<keyword id="KW-0808">Transferase</keyword>
<protein>
    <recommendedName>
        <fullName evidence="4">Protein mono-ADP-ribosyltransferase PARP6</fullName>
        <ecNumber evidence="1">2.4.2.-</ecNumber>
    </recommendedName>
    <alternativeName>
        <fullName>ADP-ribosyltransferase diphtheria toxin-like 17</fullName>
        <shortName>ARTD17</shortName>
    </alternativeName>
    <alternativeName>
        <fullName>Poly [ADP-ribose] polymerase 6</fullName>
        <shortName>PARP-6</shortName>
    </alternativeName>
</protein>
<evidence type="ECO:0000250" key="1">
    <source>
        <dbReference type="UniProtKB" id="Q2NL67"/>
    </source>
</evidence>
<evidence type="ECO:0000255" key="2">
    <source>
        <dbReference type="PROSITE-ProRule" id="PRU00397"/>
    </source>
</evidence>
<evidence type="ECO:0000303" key="3">
    <source>
    </source>
</evidence>
<evidence type="ECO:0000305" key="4"/>
<evidence type="ECO:0000312" key="5">
    <source>
        <dbReference type="MGI" id="MGI:1914537"/>
    </source>
</evidence>
<reference key="1">
    <citation type="journal article" date="2005" name="Science">
        <title>The transcriptional landscape of the mammalian genome.</title>
        <authorList>
            <person name="Carninci P."/>
            <person name="Kasukawa T."/>
            <person name="Katayama S."/>
            <person name="Gough J."/>
            <person name="Frith M.C."/>
            <person name="Maeda N."/>
            <person name="Oyama R."/>
            <person name="Ravasi T."/>
            <person name="Lenhard B."/>
            <person name="Wells C."/>
            <person name="Kodzius R."/>
            <person name="Shimokawa K."/>
            <person name="Bajic V.B."/>
            <person name="Brenner S.E."/>
            <person name="Batalov S."/>
            <person name="Forrest A.R."/>
            <person name="Zavolan M."/>
            <person name="Davis M.J."/>
            <person name="Wilming L.G."/>
            <person name="Aidinis V."/>
            <person name="Allen J.E."/>
            <person name="Ambesi-Impiombato A."/>
            <person name="Apweiler R."/>
            <person name="Aturaliya R.N."/>
            <person name="Bailey T.L."/>
            <person name="Bansal M."/>
            <person name="Baxter L."/>
            <person name="Beisel K.W."/>
            <person name="Bersano T."/>
            <person name="Bono H."/>
            <person name="Chalk A.M."/>
            <person name="Chiu K.P."/>
            <person name="Choudhary V."/>
            <person name="Christoffels A."/>
            <person name="Clutterbuck D.R."/>
            <person name="Crowe M.L."/>
            <person name="Dalla E."/>
            <person name="Dalrymple B.P."/>
            <person name="de Bono B."/>
            <person name="Della Gatta G."/>
            <person name="di Bernardo D."/>
            <person name="Down T."/>
            <person name="Engstrom P."/>
            <person name="Fagiolini M."/>
            <person name="Faulkner G."/>
            <person name="Fletcher C.F."/>
            <person name="Fukushima T."/>
            <person name="Furuno M."/>
            <person name="Futaki S."/>
            <person name="Gariboldi M."/>
            <person name="Georgii-Hemming P."/>
            <person name="Gingeras T.R."/>
            <person name="Gojobori T."/>
            <person name="Green R.E."/>
            <person name="Gustincich S."/>
            <person name="Harbers M."/>
            <person name="Hayashi Y."/>
            <person name="Hensch T.K."/>
            <person name="Hirokawa N."/>
            <person name="Hill D."/>
            <person name="Huminiecki L."/>
            <person name="Iacono M."/>
            <person name="Ikeo K."/>
            <person name="Iwama A."/>
            <person name="Ishikawa T."/>
            <person name="Jakt M."/>
            <person name="Kanapin A."/>
            <person name="Katoh M."/>
            <person name="Kawasawa Y."/>
            <person name="Kelso J."/>
            <person name="Kitamura H."/>
            <person name="Kitano H."/>
            <person name="Kollias G."/>
            <person name="Krishnan S.P."/>
            <person name="Kruger A."/>
            <person name="Kummerfeld S.K."/>
            <person name="Kurochkin I.V."/>
            <person name="Lareau L.F."/>
            <person name="Lazarevic D."/>
            <person name="Lipovich L."/>
            <person name="Liu J."/>
            <person name="Liuni S."/>
            <person name="McWilliam S."/>
            <person name="Madan Babu M."/>
            <person name="Madera M."/>
            <person name="Marchionni L."/>
            <person name="Matsuda H."/>
            <person name="Matsuzawa S."/>
            <person name="Miki H."/>
            <person name="Mignone F."/>
            <person name="Miyake S."/>
            <person name="Morris K."/>
            <person name="Mottagui-Tabar S."/>
            <person name="Mulder N."/>
            <person name="Nakano N."/>
            <person name="Nakauchi H."/>
            <person name="Ng P."/>
            <person name="Nilsson R."/>
            <person name="Nishiguchi S."/>
            <person name="Nishikawa S."/>
            <person name="Nori F."/>
            <person name="Ohara O."/>
            <person name="Okazaki Y."/>
            <person name="Orlando V."/>
            <person name="Pang K.C."/>
            <person name="Pavan W.J."/>
            <person name="Pavesi G."/>
            <person name="Pesole G."/>
            <person name="Petrovsky N."/>
            <person name="Piazza S."/>
            <person name="Reed J."/>
            <person name="Reid J.F."/>
            <person name="Ring B.Z."/>
            <person name="Ringwald M."/>
            <person name="Rost B."/>
            <person name="Ruan Y."/>
            <person name="Salzberg S.L."/>
            <person name="Sandelin A."/>
            <person name="Schneider C."/>
            <person name="Schoenbach C."/>
            <person name="Sekiguchi K."/>
            <person name="Semple C.A."/>
            <person name="Seno S."/>
            <person name="Sessa L."/>
            <person name="Sheng Y."/>
            <person name="Shibata Y."/>
            <person name="Shimada H."/>
            <person name="Shimada K."/>
            <person name="Silva D."/>
            <person name="Sinclair B."/>
            <person name="Sperling S."/>
            <person name="Stupka E."/>
            <person name="Sugiura K."/>
            <person name="Sultana R."/>
            <person name="Takenaka Y."/>
            <person name="Taki K."/>
            <person name="Tammoja K."/>
            <person name="Tan S.L."/>
            <person name="Tang S."/>
            <person name="Taylor M.S."/>
            <person name="Tegner J."/>
            <person name="Teichmann S.A."/>
            <person name="Ueda H.R."/>
            <person name="van Nimwegen E."/>
            <person name="Verardo R."/>
            <person name="Wei C.L."/>
            <person name="Yagi K."/>
            <person name="Yamanishi H."/>
            <person name="Zabarovsky E."/>
            <person name="Zhu S."/>
            <person name="Zimmer A."/>
            <person name="Hide W."/>
            <person name="Bult C."/>
            <person name="Grimmond S.M."/>
            <person name="Teasdale R.D."/>
            <person name="Liu E.T."/>
            <person name="Brusic V."/>
            <person name="Quackenbush J."/>
            <person name="Wahlestedt C."/>
            <person name="Mattick J.S."/>
            <person name="Hume D.A."/>
            <person name="Kai C."/>
            <person name="Sasaki D."/>
            <person name="Tomaru Y."/>
            <person name="Fukuda S."/>
            <person name="Kanamori-Katayama M."/>
            <person name="Suzuki M."/>
            <person name="Aoki J."/>
            <person name="Arakawa T."/>
            <person name="Iida J."/>
            <person name="Imamura K."/>
            <person name="Itoh M."/>
            <person name="Kato T."/>
            <person name="Kawaji H."/>
            <person name="Kawagashira N."/>
            <person name="Kawashima T."/>
            <person name="Kojima M."/>
            <person name="Kondo S."/>
            <person name="Konno H."/>
            <person name="Nakano K."/>
            <person name="Ninomiya N."/>
            <person name="Nishio T."/>
            <person name="Okada M."/>
            <person name="Plessy C."/>
            <person name="Shibata K."/>
            <person name="Shiraki T."/>
            <person name="Suzuki S."/>
            <person name="Tagami M."/>
            <person name="Waki K."/>
            <person name="Watahiki A."/>
            <person name="Okamura-Oho Y."/>
            <person name="Suzuki H."/>
            <person name="Kawai J."/>
            <person name="Hayashizaki Y."/>
        </authorList>
    </citation>
    <scope>NUCLEOTIDE SEQUENCE [LARGE SCALE MRNA] (ISOFORM 2)</scope>
    <source>
        <strain>C57BL/6J</strain>
        <tissue>Skin</tissue>
    </source>
</reference>
<reference key="2">
    <citation type="journal article" date="2004" name="Genome Res.">
        <title>The status, quality, and expansion of the NIH full-length cDNA project: the Mammalian Gene Collection (MGC).</title>
        <authorList>
            <consortium name="The MGC Project Team"/>
        </authorList>
    </citation>
    <scope>NUCLEOTIDE SEQUENCE [LARGE SCALE MRNA] (ISOFORM 1)</scope>
    <source>
        <strain>C57BL/6J</strain>
        <tissue>Brain</tissue>
    </source>
</reference>